<name>ARFS_ARATH</name>
<protein>
    <recommendedName>
        <fullName evidence="10">Auxin response factor 19</fullName>
    </recommendedName>
    <alternativeName>
        <fullName evidence="11">Auxin-responsive protein IAA22</fullName>
    </alternativeName>
</protein>
<gene>
    <name evidence="10" type="primary">ARF19</name>
    <name evidence="11" type="synonym">IAA22</name>
    <name evidence="13" type="ordered locus">At1g19220</name>
    <name evidence="14" type="ORF">T29M8.9</name>
</gene>
<accession>Q8RYC8</accession>
<accession>O49961</accession>
<accession>Q5IRX3</accession>
<accession>Q9LMA4</accession>
<sequence>MKAPSNGFLPSSNEGEKKPINSQLWHACAGPLVSLPPVGSLVVYFPQGHSEQVAASMQKQTDFIPNYPNLPSKLICLLHSVTLHADTETDEVYAQMTLQPVNKYDREALLASDMGLKLNRQPTEFFCKTLTASDTSTHGGFSVPRRAAEKIFPPLDFSMQPPAQEIVAKDLHDTTWTFRHIYRGQPKRHLLTTGWSVFVSTKRLFAGDSVLFVRDEKSQLMLGIRRANRQTPTLSSSVISSDSMHIGILAAAAHANANSSPFTIFFNPRASPSEFVVPLAKYNKALYAQVSLGMRFRMMFETEDCGVRRYMGTVTGISDLDPVRWKGSQWRNLQVGWDESTAGDRPSRVSIWEIEPVITPFYICPPPFFRPKYPRQPGMPDDELDMENAFKRAMPWMGEDFGMKDAQSSMFPGLSLVQWMSMQQNNPLSGSATPQLPSALSSFNLPNNFASNDPSKLLNFQSPNLSSANSQFNKPNTVNHISQQMQAQPAMVKSQQQQQQQQQQHQHQQQQLQQQQQLQMSQQQVQQQGIYNNGTIAVANQVSCQSPNQPTGFSQSQLQQQSMLPTGAKMTHQNINSMGNKGLSQMTSFAQEMQFQQQLEMHNSSQLLRNQQEQSSLHSLQQNLSQNPQQLQMQQQSSKPSPSQQLQLQLLQKLQQQQQQQSIPPVSSSLQPQLSALQQTQSHQLQQLLSSQNQQPLAHGNNSFPASTFMQPPQIQVSPQQQGQMSNKNLVAAGRSHSGHTDGEAPSCSTSPSANNTGHDNVSPTNFLSRNQQQGQAASVSASDSVFERASNPVQELYTKTESRISQGMMNMKSAGEHFRFKSAVTDQIDVSTAGTTYCPDVVGPVQQQQTFPLPSFGFDGDCQSHHPRNNLAFPGNLEAVTSDPLYSQKDFQNLVPNYGNTPRDIETELSSAAISSQSFGIPSIPFKPGCSNEVGGINDSGIMNGGGLWPNQTQRMRTYTKVQKRGSVGRSIDVTRYSGYDELRHDLARMFGIEGQLEDPLTSDWKLVYTDHENDILLVGDDPWEEFVNCVQNIKILSSVEVQQMSLDGDLAAIPTTNQACSETDSGNAWKVHYEDTSAAASFNR</sequence>
<feature type="chain" id="PRO_0000111523" description="Auxin response factor 19">
    <location>
        <begin position="1"/>
        <end position="1086"/>
    </location>
</feature>
<feature type="domain" description="PB1" evidence="2">
    <location>
        <begin position="958"/>
        <end position="1051"/>
    </location>
</feature>
<feature type="DNA-binding region" description="TF-B3" evidence="1">
    <location>
        <begin position="126"/>
        <end position="228"/>
    </location>
</feature>
<feature type="region of interest" description="Disordered" evidence="3">
    <location>
        <begin position="454"/>
        <end position="504"/>
    </location>
</feature>
<feature type="region of interest" description="Disordered" evidence="3">
    <location>
        <begin position="545"/>
        <end position="564"/>
    </location>
</feature>
<feature type="region of interest" description="Disordered" evidence="3">
    <location>
        <begin position="624"/>
        <end position="647"/>
    </location>
</feature>
<feature type="region of interest" description="Disordered" evidence="3">
    <location>
        <begin position="659"/>
        <end position="788"/>
    </location>
</feature>
<feature type="compositionally biased region" description="Polar residues" evidence="3">
    <location>
        <begin position="454"/>
        <end position="485"/>
    </location>
</feature>
<feature type="compositionally biased region" description="Low complexity" evidence="3">
    <location>
        <begin position="486"/>
        <end position="504"/>
    </location>
</feature>
<feature type="compositionally biased region" description="Low complexity" evidence="3">
    <location>
        <begin position="659"/>
        <end position="697"/>
    </location>
</feature>
<feature type="compositionally biased region" description="Polar residues" evidence="3">
    <location>
        <begin position="700"/>
        <end position="710"/>
    </location>
</feature>
<feature type="compositionally biased region" description="Low complexity" evidence="3">
    <location>
        <begin position="711"/>
        <end position="724"/>
    </location>
</feature>
<feature type="compositionally biased region" description="Polar residues" evidence="3">
    <location>
        <begin position="747"/>
        <end position="771"/>
    </location>
</feature>
<feature type="compositionally biased region" description="Low complexity" evidence="3">
    <location>
        <begin position="772"/>
        <end position="785"/>
    </location>
</feature>
<keyword id="KW-0927">Auxin signaling pathway</keyword>
<keyword id="KW-0238">DNA-binding</keyword>
<keyword id="KW-0539">Nucleus</keyword>
<keyword id="KW-1185">Reference proteome</keyword>
<keyword id="KW-0804">Transcription</keyword>
<keyword id="KW-0805">Transcription regulation</keyword>
<dbReference type="EMBL" id="U53672">
    <property type="protein sequence ID" value="AAB91321.2"/>
    <property type="molecule type" value="mRNA"/>
</dbReference>
<dbReference type="EMBL" id="AY008390">
    <property type="protein sequence ID" value="AAG35176.1"/>
    <property type="molecule type" value="Genomic_DNA"/>
</dbReference>
<dbReference type="EMBL" id="AY669794">
    <property type="protein sequence ID" value="AAT67078.1"/>
    <property type="molecule type" value="mRNA"/>
</dbReference>
<dbReference type="EMBL" id="AC069143">
    <property type="protein sequence ID" value="AAF82232.1"/>
    <property type="status" value="ALT_SEQ"/>
    <property type="molecule type" value="Genomic_DNA"/>
</dbReference>
<dbReference type="EMBL" id="CP002684">
    <property type="protein sequence ID" value="AEE29819.1"/>
    <property type="molecule type" value="Genomic_DNA"/>
</dbReference>
<dbReference type="EMBL" id="AB493467">
    <property type="protein sequence ID" value="BAH30305.1"/>
    <property type="molecule type" value="mRNA"/>
</dbReference>
<dbReference type="EMBL" id="AJ441312">
    <property type="protein sequence ID" value="CAD29695.1"/>
    <property type="molecule type" value="mRNA"/>
</dbReference>
<dbReference type="PIR" id="G86325">
    <property type="entry name" value="G86325"/>
</dbReference>
<dbReference type="RefSeq" id="NP_173356.1">
    <property type="nucleotide sequence ID" value="NM_101780.4"/>
</dbReference>
<dbReference type="SMR" id="Q8RYC8"/>
<dbReference type="BioGRID" id="23744">
    <property type="interactions" value="138"/>
</dbReference>
<dbReference type="DIP" id="DIP-33547N"/>
<dbReference type="FunCoup" id="Q8RYC8">
    <property type="interactions" value="904"/>
</dbReference>
<dbReference type="IntAct" id="Q8RYC8">
    <property type="interactions" value="146"/>
</dbReference>
<dbReference type="STRING" id="3702.Q8RYC8"/>
<dbReference type="GlyGen" id="Q8RYC8">
    <property type="glycosylation" value="2 sites, 1 O-linked glycan (2 sites)"/>
</dbReference>
<dbReference type="PaxDb" id="3702-AT1G19220.1"/>
<dbReference type="ProteomicsDB" id="246596"/>
<dbReference type="EnsemblPlants" id="AT1G19220.1">
    <property type="protein sequence ID" value="AT1G19220.1"/>
    <property type="gene ID" value="AT1G19220"/>
</dbReference>
<dbReference type="GeneID" id="838505"/>
<dbReference type="Gramene" id="AT1G19220.1">
    <property type="protein sequence ID" value="AT1G19220.1"/>
    <property type="gene ID" value="AT1G19220"/>
</dbReference>
<dbReference type="KEGG" id="ath:AT1G19220"/>
<dbReference type="Araport" id="AT1G19220"/>
<dbReference type="TAIR" id="AT1G19220">
    <property type="gene designation" value="ARF19"/>
</dbReference>
<dbReference type="eggNOG" id="ENOG502QSK9">
    <property type="taxonomic scope" value="Eukaryota"/>
</dbReference>
<dbReference type="HOGENOM" id="CLU_002626_1_1_1"/>
<dbReference type="InParanoid" id="Q8RYC8"/>
<dbReference type="OMA" id="IQSHPRN"/>
<dbReference type="PhylomeDB" id="Q8RYC8"/>
<dbReference type="PRO" id="PR:Q8RYC8"/>
<dbReference type="Proteomes" id="UP000006548">
    <property type="component" value="Chromosome 1"/>
</dbReference>
<dbReference type="ExpressionAtlas" id="Q8RYC8">
    <property type="expression patterns" value="baseline and differential"/>
</dbReference>
<dbReference type="GO" id="GO:0005634">
    <property type="term" value="C:nucleus"/>
    <property type="evidence" value="ECO:0000314"/>
    <property type="project" value="UniProtKB"/>
</dbReference>
<dbReference type="GO" id="GO:0003677">
    <property type="term" value="F:DNA binding"/>
    <property type="evidence" value="ECO:0000314"/>
    <property type="project" value="TAIR"/>
</dbReference>
<dbReference type="GO" id="GO:0003700">
    <property type="term" value="F:DNA-binding transcription factor activity"/>
    <property type="evidence" value="ECO:0000250"/>
    <property type="project" value="TAIR"/>
</dbReference>
<dbReference type="GO" id="GO:0043565">
    <property type="term" value="F:sequence-specific DNA binding"/>
    <property type="evidence" value="ECO:0000314"/>
    <property type="project" value="TAIR"/>
</dbReference>
<dbReference type="GO" id="GO:0000976">
    <property type="term" value="F:transcription cis-regulatory region binding"/>
    <property type="evidence" value="ECO:0000353"/>
    <property type="project" value="TAIR"/>
</dbReference>
<dbReference type="GO" id="GO:0009734">
    <property type="term" value="P:auxin-activated signaling pathway"/>
    <property type="evidence" value="ECO:0007669"/>
    <property type="project" value="UniProtKB-KW"/>
</dbReference>
<dbReference type="GO" id="GO:1990110">
    <property type="term" value="P:callus formation"/>
    <property type="evidence" value="ECO:0000315"/>
    <property type="project" value="UniProtKB"/>
</dbReference>
<dbReference type="GO" id="GO:0048527">
    <property type="term" value="P:lateral root development"/>
    <property type="evidence" value="ECO:0000316"/>
    <property type="project" value="TAIR"/>
</dbReference>
<dbReference type="GO" id="GO:0010311">
    <property type="term" value="P:lateral root formation"/>
    <property type="evidence" value="ECO:0000316"/>
    <property type="project" value="TAIR"/>
</dbReference>
<dbReference type="GO" id="GO:0048366">
    <property type="term" value="P:leaf development"/>
    <property type="evidence" value="ECO:0000316"/>
    <property type="project" value="TAIR"/>
</dbReference>
<dbReference type="GO" id="GO:0009733">
    <property type="term" value="P:response to auxin"/>
    <property type="evidence" value="ECO:0000315"/>
    <property type="project" value="TAIR"/>
</dbReference>
<dbReference type="GO" id="GO:0009723">
    <property type="term" value="P:response to ethylene"/>
    <property type="evidence" value="ECO:0000315"/>
    <property type="project" value="TAIR"/>
</dbReference>
<dbReference type="CDD" id="cd10017">
    <property type="entry name" value="B3_DNA"/>
    <property type="match status" value="1"/>
</dbReference>
<dbReference type="FunFam" id="2.30.30.1040:FF:000001">
    <property type="entry name" value="Auxin response factor"/>
    <property type="match status" value="1"/>
</dbReference>
<dbReference type="FunFam" id="2.40.330.10:FF:000001">
    <property type="entry name" value="Auxin response factor"/>
    <property type="match status" value="1"/>
</dbReference>
<dbReference type="FunFam" id="3.10.20.90:FF:000047">
    <property type="entry name" value="Auxin response factor"/>
    <property type="match status" value="1"/>
</dbReference>
<dbReference type="Gene3D" id="2.30.30.1040">
    <property type="match status" value="1"/>
</dbReference>
<dbReference type="Gene3D" id="2.40.330.10">
    <property type="entry name" value="DNA-binding pseudobarrel domain"/>
    <property type="match status" value="1"/>
</dbReference>
<dbReference type="Gene3D" id="3.10.20.90">
    <property type="entry name" value="Phosphatidylinositol 3-kinase Catalytic Subunit, Chain A, domain 1"/>
    <property type="match status" value="1"/>
</dbReference>
<dbReference type="InterPro" id="IPR010525">
    <property type="entry name" value="ARF_dom"/>
</dbReference>
<dbReference type="InterPro" id="IPR044835">
    <property type="entry name" value="ARF_plant"/>
</dbReference>
<dbReference type="InterPro" id="IPR033389">
    <property type="entry name" value="AUX/IAA_dom"/>
</dbReference>
<dbReference type="InterPro" id="IPR003340">
    <property type="entry name" value="B3_DNA-bd"/>
</dbReference>
<dbReference type="InterPro" id="IPR015300">
    <property type="entry name" value="DNA-bd_pseudobarrel_sf"/>
</dbReference>
<dbReference type="InterPro" id="IPR053793">
    <property type="entry name" value="PB1-like"/>
</dbReference>
<dbReference type="PANTHER" id="PTHR31384:SF21">
    <property type="entry name" value="AUXIN RESPONSE FACTOR 19"/>
    <property type="match status" value="1"/>
</dbReference>
<dbReference type="PANTHER" id="PTHR31384">
    <property type="entry name" value="AUXIN RESPONSE FACTOR 4-RELATED"/>
    <property type="match status" value="1"/>
</dbReference>
<dbReference type="Pfam" id="PF06507">
    <property type="entry name" value="ARF_AD"/>
    <property type="match status" value="1"/>
</dbReference>
<dbReference type="Pfam" id="PF02309">
    <property type="entry name" value="AUX_IAA"/>
    <property type="match status" value="1"/>
</dbReference>
<dbReference type="Pfam" id="PF02362">
    <property type="entry name" value="B3"/>
    <property type="match status" value="1"/>
</dbReference>
<dbReference type="SMART" id="SM01019">
    <property type="entry name" value="B3"/>
    <property type="match status" value="1"/>
</dbReference>
<dbReference type="SUPFAM" id="SSF54277">
    <property type="entry name" value="CAD &amp; PB1 domains"/>
    <property type="match status" value="1"/>
</dbReference>
<dbReference type="SUPFAM" id="SSF101936">
    <property type="entry name" value="DNA-binding pseudobarrel domain"/>
    <property type="match status" value="1"/>
</dbReference>
<dbReference type="PROSITE" id="PS50863">
    <property type="entry name" value="B3"/>
    <property type="match status" value="1"/>
</dbReference>
<dbReference type="PROSITE" id="PS51745">
    <property type="entry name" value="PB1"/>
    <property type="match status" value="1"/>
</dbReference>
<comment type="function">
    <text evidence="4 5 6 7">Auxin response factors (ARFs) are transcriptional factors that bind specifically to the DNA sequence 5'-TGTCTC-3' found in the auxin-responsive promoter elements (AuxREs). Could act as transcriptional activator or repressor. Formation of heterodimers with Aux/IAA proteins may alter their ability to modulate early auxin response genes expression. Involved in ethylene responses. Regulates lateral root formation through direct regulation of LBD16 and/or LBD29 (PubMed:29184030). Functionally redundant with ARF7 (PubMed:29184030). Involved in cellular dedifferentiation during callus formation on callus-inducing medium (CIM) and in an ATXR2-dependent manner (PubMed:29184030).</text>
</comment>
<comment type="subunit">
    <text evidence="7 8 9">Homodimers and heterodimers (PubMed:9342315). Interacts with the auxin-responsive protein IAA1 (PubMed:9342315). Binds to JMJ30 (PubMed:29923261). Binds to ATXR2 in the nucleus (PubMed:29184030).</text>
</comment>
<comment type="interaction">
    <interactant intactId="EBI-529887">
        <id>Q8RYC8</id>
    </interactant>
    <interactant intactId="EBI-630505">
        <id>P49677</id>
        <label>IAA1</label>
    </interactant>
    <organismsDiffer>false</organismsDiffer>
    <experiments>4</experiments>
</comment>
<comment type="interaction">
    <interactant intactId="EBI-529887">
        <id>Q8RYC8</id>
    </interactant>
    <interactant intactId="EBI-3946434">
        <id>Q38828</id>
        <label>IAA10</label>
    </interactant>
    <organismsDiffer>false</organismsDiffer>
    <experiments>7</experiments>
</comment>
<comment type="interaction">
    <interactant intactId="EBI-529887">
        <id>Q8RYC8</id>
    </interactant>
    <interactant intactId="EBI-2367923">
        <id>Q38829</id>
        <label>IAA11</label>
    </interactant>
    <organismsDiffer>false</organismsDiffer>
    <experiments>3</experiments>
</comment>
<comment type="interaction">
    <interactant intactId="EBI-529887">
        <id>Q8RYC8</id>
    </interactant>
    <interactant intactId="EBI-1554143">
        <id>Q38831</id>
        <label>IAA13</label>
    </interactant>
    <organismsDiffer>false</organismsDiffer>
    <experiments>3</experiments>
</comment>
<comment type="interaction">
    <interactant intactId="EBI-529887">
        <id>Q8RYC8</id>
    </interactant>
    <interactant intactId="EBI-2295562">
        <id>Q38832</id>
        <label>IAA14</label>
    </interactant>
    <organismsDiffer>false</organismsDiffer>
    <experiments>4</experiments>
</comment>
<comment type="interaction">
    <interactant intactId="EBI-529887">
        <id>Q8RYC8</id>
    </interactant>
    <interactant intactId="EBI-632231">
        <id>O24407</id>
        <label>IAA16</label>
    </interactant>
    <organismsDiffer>false</organismsDiffer>
    <experiments>6</experiments>
</comment>
<comment type="interaction">
    <interactant intactId="EBI-529887">
        <id>Q8RYC8</id>
    </interactant>
    <interactant intactId="EBI-632243">
        <id>P93830</id>
        <label>IAA17</label>
    </interactant>
    <organismsDiffer>false</organismsDiffer>
    <experiments>6</experiments>
</comment>
<comment type="interaction">
    <interactant intactId="EBI-529887">
        <id>Q8RYC8</id>
    </interactant>
    <interactant intactId="EBI-2295525">
        <id>O24408</id>
        <label>IAA18</label>
    </interactant>
    <organismsDiffer>false</organismsDiffer>
    <experiments>5</experiments>
</comment>
<comment type="interaction">
    <interactant intactId="EBI-529887">
        <id>Q8RYC8</id>
    </interactant>
    <interactant intactId="EBI-632257">
        <id>O24409</id>
        <label>IAA19</label>
    </interactant>
    <organismsDiffer>false</organismsDiffer>
    <experiments>4</experiments>
</comment>
<comment type="interaction">
    <interactant intactId="EBI-529887">
        <id>Q8RYC8</id>
    </interactant>
    <interactant intactId="EBI-632343">
        <id>P49678</id>
        <label>IAA2</label>
    </interactant>
    <organismsDiffer>false</organismsDiffer>
    <experiments>3</experiments>
</comment>
<comment type="interaction">
    <interactant intactId="EBI-529887">
        <id>Q8RYC8</id>
    </interactant>
    <interactant intactId="EBI-3946677">
        <id>Q9ZSY8</id>
        <label>IAA27</label>
    </interactant>
    <organismsDiffer>false</organismsDiffer>
    <experiments>3</experiments>
</comment>
<comment type="interaction">
    <interactant intactId="EBI-529887">
        <id>Q8RYC8</id>
    </interactant>
    <interactant intactId="EBI-3133404">
        <id>Q9XFM0</id>
        <label>IAA28</label>
    </interactant>
    <organismsDiffer>false</organismsDiffer>
    <experiments>3</experiments>
</comment>
<comment type="interaction">
    <interactant intactId="EBI-529887">
        <id>Q8RYC8</id>
    </interactant>
    <interactant intactId="EBI-3946697">
        <id>Q93WC4</id>
        <label>IAA29</label>
    </interactant>
    <organismsDiffer>false</organismsDiffer>
    <experiments>3</experiments>
</comment>
<comment type="interaction">
    <interactant intactId="EBI-529887">
        <id>Q8RYC8</id>
    </interactant>
    <interactant intactId="EBI-307174">
        <id>Q38822</id>
        <label>IAA3</label>
    </interactant>
    <organismsDiffer>false</organismsDiffer>
    <experiments>4</experiments>
</comment>
<comment type="interaction">
    <interactant intactId="EBI-529887">
        <id>Q8RYC8</id>
    </interactant>
    <interactant intactId="EBI-3946448">
        <id>Q8RYC6</id>
        <label>IAA32</label>
    </interactant>
    <organismsDiffer>false</organismsDiffer>
    <experiments>4</experiments>
</comment>
<comment type="interaction">
    <interactant intactId="EBI-529887">
        <id>Q8RYC8</id>
    </interactant>
    <interactant intactId="EBI-3946739">
        <id>Q9FKM7</id>
        <label>IAA33</label>
    </interactant>
    <organismsDiffer>false</organismsDiffer>
    <experiments>4</experiments>
</comment>
<comment type="interaction">
    <interactant intactId="EBI-529887">
        <id>Q8RYC8</id>
    </interactant>
    <interactant intactId="EBI-3946459">
        <id>Q9C5X0</id>
        <label>IAA34</label>
    </interactant>
    <organismsDiffer>false</organismsDiffer>
    <experiments>4</experiments>
</comment>
<comment type="interaction">
    <interactant intactId="EBI-529887">
        <id>Q8RYC8</id>
    </interactant>
    <interactant intactId="EBI-632187">
        <id>P33077</id>
        <label>IAA4</label>
    </interactant>
    <organismsDiffer>false</organismsDiffer>
    <experiments>3</experiments>
</comment>
<comment type="interaction">
    <interactant intactId="EBI-529887">
        <id>Q8RYC8</id>
    </interactant>
    <interactant intactId="EBI-3946487">
        <id>P33078</id>
        <label>IAA5</label>
    </interactant>
    <organismsDiffer>false</organismsDiffer>
    <experiments>3</experiments>
</comment>
<comment type="interaction">
    <interactant intactId="EBI-529887">
        <id>Q8RYC8</id>
    </interactant>
    <interactant intactId="EBI-602959">
        <id>Q38825</id>
        <label>IAA7</label>
    </interactant>
    <organismsDiffer>false</organismsDiffer>
    <experiments>6</experiments>
</comment>
<comment type="interaction">
    <interactant intactId="EBI-529887">
        <id>Q8RYC8</id>
    </interactant>
    <interactant intactId="EBI-632200">
        <id>Q38826</id>
        <label>IAA8</label>
    </interactant>
    <organismsDiffer>false</organismsDiffer>
    <experiments>4</experiments>
</comment>
<comment type="interaction">
    <interactant intactId="EBI-529887">
        <id>Q8RYC8</id>
    </interactant>
    <interactant intactId="EBI-15193025">
        <id>Q9LXU1</id>
        <label>NOT9B</label>
    </interactant>
    <organismsDiffer>false</organismsDiffer>
    <experiments>3</experiments>
</comment>
<comment type="subcellular location">
    <subcellularLocation>
        <location evidence="1 7 9">Nucleus</location>
    </subcellularLocation>
</comment>
<comment type="induction">
    <text evidence="5">By auxin and ethylene.</text>
</comment>
<comment type="domain">
    <text evidence="9">Interactions between auxin response factors (ARFs) and Aux/IAA proteins occur through their C-terminal dimerization domains III and IV.</text>
</comment>
<comment type="disruption phenotype">
    <text evidence="7">The arf7-1 arf19-2 double mutant is defective in callus formation.</text>
</comment>
<comment type="similarity">
    <text evidence="12">Belongs to the ARF family.</text>
</comment>
<comment type="sequence caution" evidence="12">
    <conflict type="erroneous gene model prediction">
        <sequence resource="EMBL-CDS" id="AAF82232"/>
    </conflict>
</comment>
<reference key="1">
    <citation type="journal article" date="1997" name="Proc. Natl. Acad. Sci. U.S.A.">
        <title>Protein-protein interactions among the Aux/IAA proteins.</title>
        <authorList>
            <person name="Kim J."/>
            <person name="Harter K."/>
            <person name="Theologis A."/>
        </authorList>
    </citation>
    <scope>NUCLEOTIDE SEQUENCE [MRNA]</scope>
    <scope>SUBUNIT</scope>
    <scope>SUBCELLULAR LOCATION</scope>
    <scope>DOMAIN</scope>
    <source>
        <strain>cv. Columbia</strain>
        <tissue>Etiolated seedling</tissue>
    </source>
</reference>
<reference key="2">
    <citation type="submission" date="2005-01" db="EMBL/GenBank/DDBJ databases">
        <authorList>
            <person name="Arima K."/>
            <person name="Overvoorde P.J."/>
            <person name="Theologis A."/>
        </authorList>
    </citation>
    <scope>SEQUENCE REVISION</scope>
</reference>
<reference key="3">
    <citation type="journal article" date="2005" name="Plant Cell">
        <title>Functional genomic analysis of the AUXIN RESPONSE FACTOR gene family members in Arabidopsis thaliana: unique and overlapping functions of ARF7 and ARF19.</title>
        <authorList>
            <person name="Okushima Y."/>
            <person name="Overvoorde P.J."/>
            <person name="Arima K."/>
            <person name="Alonso J.M."/>
            <person name="Chan A."/>
            <person name="Chang C."/>
            <person name="Ecker J.R."/>
            <person name="Hughes B."/>
            <person name="Lui A."/>
            <person name="Nguyen D."/>
            <person name="Onodera C."/>
            <person name="Quach H."/>
            <person name="Smith A."/>
            <person name="Yu G."/>
            <person name="Theologis A."/>
        </authorList>
    </citation>
    <scope>NUCLEOTIDE SEQUENCE [GENOMIC DNA / MRNA]</scope>
    <source>
        <strain>cv. Columbia</strain>
    </source>
</reference>
<reference key="4">
    <citation type="journal article" date="2000" name="Nature">
        <title>Sequence and analysis of chromosome 1 of the plant Arabidopsis thaliana.</title>
        <authorList>
            <person name="Theologis A."/>
            <person name="Ecker J.R."/>
            <person name="Palm C.J."/>
            <person name="Federspiel N.A."/>
            <person name="Kaul S."/>
            <person name="White O."/>
            <person name="Alonso J."/>
            <person name="Altafi H."/>
            <person name="Araujo R."/>
            <person name="Bowman C.L."/>
            <person name="Brooks S.Y."/>
            <person name="Buehler E."/>
            <person name="Chan A."/>
            <person name="Chao Q."/>
            <person name="Chen H."/>
            <person name="Cheuk R.F."/>
            <person name="Chin C.W."/>
            <person name="Chung M.K."/>
            <person name="Conn L."/>
            <person name="Conway A.B."/>
            <person name="Conway A.R."/>
            <person name="Creasy T.H."/>
            <person name="Dewar K."/>
            <person name="Dunn P."/>
            <person name="Etgu P."/>
            <person name="Feldblyum T.V."/>
            <person name="Feng J.-D."/>
            <person name="Fong B."/>
            <person name="Fujii C.Y."/>
            <person name="Gill J.E."/>
            <person name="Goldsmith A.D."/>
            <person name="Haas B."/>
            <person name="Hansen N.F."/>
            <person name="Hughes B."/>
            <person name="Huizar L."/>
            <person name="Hunter J.L."/>
            <person name="Jenkins J."/>
            <person name="Johnson-Hopson C."/>
            <person name="Khan S."/>
            <person name="Khaykin E."/>
            <person name="Kim C.J."/>
            <person name="Koo H.L."/>
            <person name="Kremenetskaia I."/>
            <person name="Kurtz D.B."/>
            <person name="Kwan A."/>
            <person name="Lam B."/>
            <person name="Langin-Hooper S."/>
            <person name="Lee A."/>
            <person name="Lee J.M."/>
            <person name="Lenz C.A."/>
            <person name="Li J.H."/>
            <person name="Li Y.-P."/>
            <person name="Lin X."/>
            <person name="Liu S.X."/>
            <person name="Liu Z.A."/>
            <person name="Luros J.S."/>
            <person name="Maiti R."/>
            <person name="Marziali A."/>
            <person name="Militscher J."/>
            <person name="Miranda M."/>
            <person name="Nguyen M."/>
            <person name="Nierman W.C."/>
            <person name="Osborne B.I."/>
            <person name="Pai G."/>
            <person name="Peterson J."/>
            <person name="Pham P.K."/>
            <person name="Rizzo M."/>
            <person name="Rooney T."/>
            <person name="Rowley D."/>
            <person name="Sakano H."/>
            <person name="Salzberg S.L."/>
            <person name="Schwartz J.R."/>
            <person name="Shinn P."/>
            <person name="Southwick A.M."/>
            <person name="Sun H."/>
            <person name="Tallon L.J."/>
            <person name="Tambunga G."/>
            <person name="Toriumi M.J."/>
            <person name="Town C.D."/>
            <person name="Utterback T."/>
            <person name="Van Aken S."/>
            <person name="Vaysberg M."/>
            <person name="Vysotskaia V.S."/>
            <person name="Walker M."/>
            <person name="Wu D."/>
            <person name="Yu G."/>
            <person name="Fraser C.M."/>
            <person name="Venter J.C."/>
            <person name="Davis R.W."/>
        </authorList>
    </citation>
    <scope>NUCLEOTIDE SEQUENCE [LARGE SCALE GENOMIC DNA]</scope>
    <source>
        <strain>cv. Columbia</strain>
    </source>
</reference>
<reference key="5">
    <citation type="journal article" date="2017" name="Plant J.">
        <title>Araport11: a complete reannotation of the Arabidopsis thaliana reference genome.</title>
        <authorList>
            <person name="Cheng C.Y."/>
            <person name="Krishnakumar V."/>
            <person name="Chan A.P."/>
            <person name="Thibaud-Nissen F."/>
            <person name="Schobel S."/>
            <person name="Town C.D."/>
        </authorList>
    </citation>
    <scope>GENOME REANNOTATION</scope>
    <source>
        <strain>cv. Columbia</strain>
    </source>
</reference>
<reference key="6">
    <citation type="submission" date="2009-03" db="EMBL/GenBank/DDBJ databases">
        <title>ORF cloning and analysis of Arabidopsis transcription factor genes.</title>
        <authorList>
            <person name="Fujita M."/>
            <person name="Mizukado S."/>
            <person name="Seki M."/>
            <person name="Shinozaki K."/>
            <person name="Mitsuda N."/>
            <person name="Takiguchi Y."/>
            <person name="Takagi M."/>
        </authorList>
    </citation>
    <scope>NUCLEOTIDE SEQUENCE [LARGE SCALE MRNA]</scope>
</reference>
<reference key="7">
    <citation type="submission" date="2002-04" db="EMBL/GenBank/DDBJ databases">
        <title>Nucleotide sequence of the Arabidopsis IAA22.</title>
        <authorList>
            <person name="Ciarbelli A.R."/>
            <person name="Carabelli M."/>
            <person name="Ruzza V."/>
            <person name="Sessa G."/>
            <person name="Steindler C."/>
            <person name="Ruberti I."/>
        </authorList>
    </citation>
    <scope>NUCLEOTIDE SEQUENCE [MRNA] OF 809-1086</scope>
    <source>
        <strain>cv. Columbia</strain>
    </source>
</reference>
<reference key="8">
    <citation type="journal article" date="2002" name="Plant Mol. Biol.">
        <title>Auxin-responsive gene expression: genes, promoters and regulatory factors.</title>
        <authorList>
            <person name="Hagen G."/>
            <person name="Guilfoyle T.J."/>
        </authorList>
    </citation>
    <scope>GENE FAMILY</scope>
    <scope>NOMENCLATURE</scope>
    <scope>FUNCTION</scope>
</reference>
<reference key="9">
    <citation type="journal article" date="2006" name="Plant Physiol.">
        <title>A role for auxin response factor 19 in auxin and ethylene signaling in Arabidopsis.</title>
        <authorList>
            <person name="Li J."/>
            <person name="Dai X."/>
            <person name="Zhao Y."/>
        </authorList>
    </citation>
    <scope>FUNCTION</scope>
    <scope>INDUCTION</scope>
</reference>
<reference key="10">
    <citation type="journal article" date="2007" name="Plant Cell">
        <title>ARF7 and ARF19 regulate lateral root formation via direct activation of LBD/ASL genes in Arabidopsis.</title>
        <authorList>
            <person name="Okushima Y."/>
            <person name="Fukaki H."/>
            <person name="Onoda M."/>
            <person name="Theologis A."/>
            <person name="Tasaka M."/>
        </authorList>
    </citation>
    <scope>FUNCTION</scope>
</reference>
<reference key="11">
    <citation type="journal article" date="2008" name="Trends Plant Sci.">
        <title>The plant B3 superfamily.</title>
        <authorList>
            <person name="Swaminathan K."/>
            <person name="Peterson K."/>
            <person name="Jack T."/>
        </authorList>
    </citation>
    <scope>GENE FAMILY</scope>
</reference>
<reference key="12">
    <citation type="journal article" date="2017" name="Sci. Signal.">
        <title>Arabidopsis ATXR2 deposits H3K36me3 at the promoters of LBD genes to facilitate cellular dedifferentiation.</title>
        <authorList>
            <person name="Lee K."/>
            <person name="Park O.S."/>
            <person name="Seo P.J."/>
        </authorList>
    </citation>
    <scope>FUNCTION</scope>
    <scope>DISRUPTION PHENOTYPE</scope>
    <scope>INTERACTION WITH ATXR2</scope>
    <scope>SUBCELLULAR LOCATION</scope>
    <source>
        <strain>cv. Columbia</strain>
    </source>
</reference>
<reference key="13">
    <citation type="journal article" date="2018" name="Plant J.">
        <title>JMJ30-mediated demethylation of H3K9me3 drives tissue identity changes to promote callus formation in Arabidopsis.</title>
        <authorList>
            <person name="Lee K."/>
            <person name="Park O.-S."/>
            <person name="Seo P.J."/>
        </authorList>
    </citation>
    <scope>INTERACTION WITH JMJ30</scope>
    <source>
        <strain>cv. Columbia</strain>
    </source>
</reference>
<organism>
    <name type="scientific">Arabidopsis thaliana</name>
    <name type="common">Mouse-ear cress</name>
    <dbReference type="NCBI Taxonomy" id="3702"/>
    <lineage>
        <taxon>Eukaryota</taxon>
        <taxon>Viridiplantae</taxon>
        <taxon>Streptophyta</taxon>
        <taxon>Embryophyta</taxon>
        <taxon>Tracheophyta</taxon>
        <taxon>Spermatophyta</taxon>
        <taxon>Magnoliopsida</taxon>
        <taxon>eudicotyledons</taxon>
        <taxon>Gunneridae</taxon>
        <taxon>Pentapetalae</taxon>
        <taxon>rosids</taxon>
        <taxon>malvids</taxon>
        <taxon>Brassicales</taxon>
        <taxon>Brassicaceae</taxon>
        <taxon>Camelineae</taxon>
        <taxon>Arabidopsis</taxon>
    </lineage>
</organism>
<evidence type="ECO:0000255" key="1">
    <source>
        <dbReference type="PROSITE-ProRule" id="PRU00326"/>
    </source>
</evidence>
<evidence type="ECO:0000255" key="2">
    <source>
        <dbReference type="PROSITE-ProRule" id="PRU01081"/>
    </source>
</evidence>
<evidence type="ECO:0000256" key="3">
    <source>
        <dbReference type="SAM" id="MobiDB-lite"/>
    </source>
</evidence>
<evidence type="ECO:0000269" key="4">
    <source>
    </source>
</evidence>
<evidence type="ECO:0000269" key="5">
    <source>
    </source>
</evidence>
<evidence type="ECO:0000269" key="6">
    <source>
    </source>
</evidence>
<evidence type="ECO:0000269" key="7">
    <source>
    </source>
</evidence>
<evidence type="ECO:0000269" key="8">
    <source>
    </source>
</evidence>
<evidence type="ECO:0000269" key="9">
    <source>
    </source>
</evidence>
<evidence type="ECO:0000303" key="10">
    <source>
    </source>
</evidence>
<evidence type="ECO:0000303" key="11">
    <source>
    </source>
</evidence>
<evidence type="ECO:0000305" key="12"/>
<evidence type="ECO:0000312" key="13">
    <source>
        <dbReference type="Araport" id="AT1G19220"/>
    </source>
</evidence>
<evidence type="ECO:0000312" key="14">
    <source>
        <dbReference type="EMBL" id="AAF82232.1"/>
    </source>
</evidence>
<proteinExistence type="evidence at protein level"/>